<keyword id="KW-0067">ATP-binding</keyword>
<keyword id="KW-0997">Cell inner membrane</keyword>
<keyword id="KW-1003">Cell membrane</keyword>
<keyword id="KW-0406">Ion transport</keyword>
<keyword id="KW-0472">Membrane</keyword>
<keyword id="KW-0547">Nucleotide-binding</keyword>
<keyword id="KW-0630">Potassium</keyword>
<keyword id="KW-0633">Potassium transport</keyword>
<keyword id="KW-1185">Reference proteome</keyword>
<keyword id="KW-0812">Transmembrane</keyword>
<keyword id="KW-1133">Transmembrane helix</keyword>
<keyword id="KW-0813">Transport</keyword>
<proteinExistence type="inferred from homology"/>
<organism>
    <name type="scientific">Brucella anthropi (strain ATCC 49188 / DSM 6882 / CCUG 24695 / JCM 21032 / LMG 3331 / NBRC 15819 / NCTC 12168 / Alc 37)</name>
    <name type="common">Ochrobactrum anthropi</name>
    <dbReference type="NCBI Taxonomy" id="439375"/>
    <lineage>
        <taxon>Bacteria</taxon>
        <taxon>Pseudomonadati</taxon>
        <taxon>Pseudomonadota</taxon>
        <taxon>Alphaproteobacteria</taxon>
        <taxon>Hyphomicrobiales</taxon>
        <taxon>Brucellaceae</taxon>
        <taxon>Brucella/Ochrobactrum group</taxon>
        <taxon>Brucella</taxon>
    </lineage>
</organism>
<feature type="chain" id="PRO_1000022299" description="Potassium-transporting ATPase KdpC subunit">
    <location>
        <begin position="1"/>
        <end position="190"/>
    </location>
</feature>
<feature type="transmembrane region" description="Helical" evidence="1">
    <location>
        <begin position="10"/>
        <end position="30"/>
    </location>
</feature>
<name>KDPC_BRUA4</name>
<dbReference type="EMBL" id="CP000759">
    <property type="protein sequence ID" value="ABS16484.1"/>
    <property type="molecule type" value="Genomic_DNA"/>
</dbReference>
<dbReference type="RefSeq" id="WP_012093146.1">
    <property type="nucleotide sequence ID" value="NC_009668.1"/>
</dbReference>
<dbReference type="SMR" id="A6X5I0"/>
<dbReference type="STRING" id="439375.Oant_3778"/>
<dbReference type="KEGG" id="oan:Oant_3778"/>
<dbReference type="PATRIC" id="fig|439375.7.peg.3942"/>
<dbReference type="eggNOG" id="COG2156">
    <property type="taxonomic scope" value="Bacteria"/>
</dbReference>
<dbReference type="HOGENOM" id="CLU_077094_2_0_5"/>
<dbReference type="Proteomes" id="UP000002301">
    <property type="component" value="Chromosome 2"/>
</dbReference>
<dbReference type="GO" id="GO:0005886">
    <property type="term" value="C:plasma membrane"/>
    <property type="evidence" value="ECO:0007669"/>
    <property type="project" value="UniProtKB-SubCell"/>
</dbReference>
<dbReference type="GO" id="GO:0005524">
    <property type="term" value="F:ATP binding"/>
    <property type="evidence" value="ECO:0007669"/>
    <property type="project" value="UniProtKB-UniRule"/>
</dbReference>
<dbReference type="GO" id="GO:0008556">
    <property type="term" value="F:P-type potassium transmembrane transporter activity"/>
    <property type="evidence" value="ECO:0007669"/>
    <property type="project" value="InterPro"/>
</dbReference>
<dbReference type="HAMAP" id="MF_00276">
    <property type="entry name" value="KdpC"/>
    <property type="match status" value="1"/>
</dbReference>
<dbReference type="InterPro" id="IPR003820">
    <property type="entry name" value="KdpC"/>
</dbReference>
<dbReference type="NCBIfam" id="TIGR00681">
    <property type="entry name" value="kdpC"/>
    <property type="match status" value="1"/>
</dbReference>
<dbReference type="NCBIfam" id="NF001454">
    <property type="entry name" value="PRK00315.1"/>
    <property type="match status" value="1"/>
</dbReference>
<dbReference type="PANTHER" id="PTHR30042">
    <property type="entry name" value="POTASSIUM-TRANSPORTING ATPASE C CHAIN"/>
    <property type="match status" value="1"/>
</dbReference>
<dbReference type="PANTHER" id="PTHR30042:SF2">
    <property type="entry name" value="POTASSIUM-TRANSPORTING ATPASE KDPC SUBUNIT"/>
    <property type="match status" value="1"/>
</dbReference>
<dbReference type="Pfam" id="PF02669">
    <property type="entry name" value="KdpC"/>
    <property type="match status" value="1"/>
</dbReference>
<dbReference type="PIRSF" id="PIRSF001296">
    <property type="entry name" value="K_ATPase_KdpC"/>
    <property type="match status" value="1"/>
</dbReference>
<gene>
    <name evidence="1" type="primary">kdpC</name>
    <name type="ordered locus">Oant_3778</name>
</gene>
<accession>A6X5I0</accession>
<comment type="function">
    <text evidence="1">Part of the high-affinity ATP-driven potassium transport (or Kdp) system, which catalyzes the hydrolysis of ATP coupled with the electrogenic transport of potassium into the cytoplasm. This subunit acts as a catalytic chaperone that increases the ATP-binding affinity of the ATP-hydrolyzing subunit KdpB by the formation of a transient KdpB/KdpC/ATP ternary complex.</text>
</comment>
<comment type="subunit">
    <text evidence="1">The system is composed of three essential subunits: KdpA, KdpB and KdpC.</text>
</comment>
<comment type="subcellular location">
    <subcellularLocation>
        <location evidence="1">Cell inner membrane</location>
        <topology evidence="1">Single-pass membrane protein</topology>
    </subcellularLocation>
</comment>
<comment type="similarity">
    <text evidence="1">Belongs to the KdpC family.</text>
</comment>
<sequence>MLKQLRPALVMIVSLTVITGLLYPLGMTGIAQVIFPANANGSLIEKDGTIIGSELIGQGFTGDRYFHGRPSAAGQNGYDAASSGGSNLGPTNPKLIERIKADATALSQDEGSARPPIDLVTTSASGLDPHISPETAFYQVPRVAKARGIDEAALREIVEQQVEARELGFLGEPVVNVLKLNLVLDRTSTK</sequence>
<protein>
    <recommendedName>
        <fullName evidence="1">Potassium-transporting ATPase KdpC subunit</fullName>
    </recommendedName>
    <alternativeName>
        <fullName evidence="1">ATP phosphohydrolase [potassium-transporting] C chain</fullName>
    </alternativeName>
    <alternativeName>
        <fullName evidence="1">Potassium-binding and translocating subunit C</fullName>
    </alternativeName>
    <alternativeName>
        <fullName evidence="1">Potassium-translocating ATPase C chain</fullName>
    </alternativeName>
</protein>
<evidence type="ECO:0000255" key="1">
    <source>
        <dbReference type="HAMAP-Rule" id="MF_00276"/>
    </source>
</evidence>
<reference key="1">
    <citation type="journal article" date="2011" name="J. Bacteriol.">
        <title>Genome of Ochrobactrum anthropi ATCC 49188 T, a versatile opportunistic pathogen and symbiont of several eukaryotic hosts.</title>
        <authorList>
            <person name="Chain P.S."/>
            <person name="Lang D.M."/>
            <person name="Comerci D.J."/>
            <person name="Malfatti S.A."/>
            <person name="Vergez L.M."/>
            <person name="Shin M."/>
            <person name="Ugalde R.A."/>
            <person name="Garcia E."/>
            <person name="Tolmasky M.E."/>
        </authorList>
    </citation>
    <scope>NUCLEOTIDE SEQUENCE [LARGE SCALE GENOMIC DNA]</scope>
    <source>
        <strain>ATCC 49188 / DSM 6882 / CCUG 24695 / JCM 21032 / LMG 3331 / NBRC 15819 / NCTC 12168 / Alc 37</strain>
    </source>
</reference>